<accession>Q8NGQ5</accession>
<accession>Q2TAN3</accession>
<accession>Q96RA7</accession>
<feature type="chain" id="PRO_0000150683" description="Olfactory receptor 9Q1">
    <location>
        <begin position="1"/>
        <end position="310"/>
    </location>
</feature>
<feature type="topological domain" description="Extracellular" evidence="1">
    <location>
        <begin position="1"/>
        <end position="25"/>
    </location>
</feature>
<feature type="transmembrane region" description="Helical; Name=1" evidence="1">
    <location>
        <begin position="26"/>
        <end position="46"/>
    </location>
</feature>
<feature type="topological domain" description="Cytoplasmic" evidence="1">
    <location>
        <begin position="47"/>
        <end position="54"/>
    </location>
</feature>
<feature type="transmembrane region" description="Helical; Name=2" evidence="1">
    <location>
        <begin position="55"/>
        <end position="75"/>
    </location>
</feature>
<feature type="topological domain" description="Extracellular" evidence="1">
    <location>
        <begin position="76"/>
        <end position="99"/>
    </location>
</feature>
<feature type="transmembrane region" description="Helical; Name=3" evidence="1">
    <location>
        <begin position="100"/>
        <end position="120"/>
    </location>
</feature>
<feature type="topological domain" description="Cytoplasmic" evidence="1">
    <location>
        <begin position="121"/>
        <end position="139"/>
    </location>
</feature>
<feature type="transmembrane region" description="Helical; Name=4" evidence="1">
    <location>
        <begin position="140"/>
        <end position="160"/>
    </location>
</feature>
<feature type="topological domain" description="Extracellular" evidence="1">
    <location>
        <begin position="161"/>
        <end position="197"/>
    </location>
</feature>
<feature type="transmembrane region" description="Helical; Name=5" evidence="1">
    <location>
        <begin position="198"/>
        <end position="217"/>
    </location>
</feature>
<feature type="topological domain" description="Cytoplasmic" evidence="1">
    <location>
        <begin position="218"/>
        <end position="236"/>
    </location>
</feature>
<feature type="transmembrane region" description="Helical; Name=6" evidence="1">
    <location>
        <begin position="237"/>
        <end position="257"/>
    </location>
</feature>
<feature type="topological domain" description="Extracellular" evidence="1">
    <location>
        <begin position="258"/>
        <end position="270"/>
    </location>
</feature>
<feature type="transmembrane region" description="Helical; Name=7" evidence="1">
    <location>
        <begin position="271"/>
        <end position="291"/>
    </location>
</feature>
<feature type="topological domain" description="Cytoplasmic" evidence="1">
    <location>
        <begin position="292"/>
        <end position="310"/>
    </location>
</feature>
<feature type="glycosylation site" description="N-linked (GlcNAc...) asparagine" evidence="1">
    <location>
        <position position="5"/>
    </location>
</feature>
<feature type="disulfide bond" evidence="2">
    <location>
        <begin position="97"/>
        <end position="189"/>
    </location>
</feature>
<feature type="sequence variant" id="VAR_053260" description="In dbSNP:rs12420738.">
    <original>R</original>
    <variation>L</variation>
    <location>
        <position position="159"/>
    </location>
</feature>
<comment type="function">
    <text evidence="3">Odorant receptor.</text>
</comment>
<comment type="subcellular location">
    <subcellularLocation>
        <location>Cell membrane</location>
        <topology>Multi-pass membrane protein</topology>
    </subcellularLocation>
</comment>
<comment type="similarity">
    <text evidence="2">Belongs to the G-protein coupled receptor 1 family.</text>
</comment>
<comment type="online information" name="Human Olfactory Receptor Data Exploratorium (HORDE)">
    <link uri="http://genome.weizmann.ac.il/horde/card/index/symbol:OR9Q1"/>
</comment>
<organism>
    <name type="scientific">Homo sapiens</name>
    <name type="common">Human</name>
    <dbReference type="NCBI Taxonomy" id="9606"/>
    <lineage>
        <taxon>Eukaryota</taxon>
        <taxon>Metazoa</taxon>
        <taxon>Chordata</taxon>
        <taxon>Craniata</taxon>
        <taxon>Vertebrata</taxon>
        <taxon>Euteleostomi</taxon>
        <taxon>Mammalia</taxon>
        <taxon>Eutheria</taxon>
        <taxon>Euarchontoglires</taxon>
        <taxon>Primates</taxon>
        <taxon>Haplorrhini</taxon>
        <taxon>Catarrhini</taxon>
        <taxon>Hominidae</taxon>
        <taxon>Homo</taxon>
    </lineage>
</organism>
<name>OR9Q1_HUMAN</name>
<sequence>MAEMNLTLVTEFLLIAFTEYPEWALPLFLLFLFMYLITVLGNLEMIILILMDHQLHAPMYFLLSHLAFMDVCYSSITVPQMLAVLLEHGAALSYTRCAAQFFLFTFFGSIDCYLLALMAYDRYLAVCQPLLYVTILTQQARLSLVAGAYVAGLISALVRTVSAFTLSFCGTSEIDFIFCDLPPLLKLTCGESYTQEVLIIMFAIFVIPASMVVILVSYLFIIVAIMGIPAGSQAKTFSTCTSHLTAVSLFFGTLIFMYLRGNSDQSSEKNRVVSVLYTEVIPMLNPLIYSLRNKEVKEALRKILNRAKLS</sequence>
<reference key="1">
    <citation type="submission" date="2001-07" db="EMBL/GenBank/DDBJ databases">
        <title>Genome-wide discovery and analysis of human seven transmembrane helix receptor genes.</title>
        <authorList>
            <person name="Suwa M."/>
            <person name="Sato T."/>
            <person name="Okouchi I."/>
            <person name="Arita M."/>
            <person name="Futami K."/>
            <person name="Matsumoto S."/>
            <person name="Tsutsumi S."/>
            <person name="Aburatani H."/>
            <person name="Asai K."/>
            <person name="Akiyama Y."/>
        </authorList>
    </citation>
    <scope>NUCLEOTIDE SEQUENCE [GENOMIC DNA]</scope>
</reference>
<reference key="2">
    <citation type="journal article" date="2002" name="Genomics">
        <title>DEFOG: a practical scheme for deciphering families of genes.</title>
        <authorList>
            <person name="Fuchs T."/>
            <person name="Malecova B."/>
            <person name="Linhart C."/>
            <person name="Sharan R."/>
            <person name="Khen M."/>
            <person name="Herwig R."/>
            <person name="Shmulevich D."/>
            <person name="Elkon R."/>
            <person name="Steinfath M."/>
            <person name="O'Brien J.K."/>
            <person name="Radelof U."/>
            <person name="Lehrach H."/>
            <person name="Lancet D."/>
            <person name="Shamir R."/>
        </authorList>
    </citation>
    <scope>NUCLEOTIDE SEQUENCE [GENOMIC DNA] OF 68-282</scope>
</reference>
<reference key="3">
    <citation type="journal article" date="2004" name="Genome Res.">
        <title>The status, quality, and expansion of the NIH full-length cDNA project: the Mammalian Gene Collection (MGC).</title>
        <authorList>
            <consortium name="The MGC Project Team"/>
        </authorList>
    </citation>
    <scope>NUCLEOTIDE SEQUENCE [LARGE SCALE MRNA]</scope>
    <source>
        <tissue>Lung</tissue>
    </source>
</reference>
<gene>
    <name type="primary">OR9Q1</name>
</gene>
<evidence type="ECO:0000255" key="1"/>
<evidence type="ECO:0000255" key="2">
    <source>
        <dbReference type="PROSITE-ProRule" id="PRU00521"/>
    </source>
</evidence>
<evidence type="ECO:0000305" key="3"/>
<protein>
    <recommendedName>
        <fullName>Olfactory receptor 9Q1</fullName>
    </recommendedName>
</protein>
<keyword id="KW-1003">Cell membrane</keyword>
<keyword id="KW-1015">Disulfide bond</keyword>
<keyword id="KW-0297">G-protein coupled receptor</keyword>
<keyword id="KW-0325">Glycoprotein</keyword>
<keyword id="KW-0472">Membrane</keyword>
<keyword id="KW-0552">Olfaction</keyword>
<keyword id="KW-0675">Receptor</keyword>
<keyword id="KW-1185">Reference proteome</keyword>
<keyword id="KW-0716">Sensory transduction</keyword>
<keyword id="KW-0807">Transducer</keyword>
<keyword id="KW-0812">Transmembrane</keyword>
<keyword id="KW-1133">Transmembrane helix</keyword>
<proteinExistence type="evidence at transcript level"/>
<dbReference type="EMBL" id="AB065734">
    <property type="protein sequence ID" value="BAC05955.1"/>
    <property type="molecule type" value="Genomic_DNA"/>
</dbReference>
<dbReference type="EMBL" id="AF399532">
    <property type="protein sequence ID" value="AAK95017.1"/>
    <property type="molecule type" value="Genomic_DNA"/>
</dbReference>
<dbReference type="EMBL" id="BC110819">
    <property type="protein sequence ID" value="AAI10820.1"/>
    <property type="molecule type" value="mRNA"/>
</dbReference>
<dbReference type="CCDS" id="CCDS31543.1"/>
<dbReference type="RefSeq" id="NP_001005212.1">
    <property type="nucleotide sequence ID" value="NM_001005212.4"/>
</dbReference>
<dbReference type="SMR" id="Q8NGQ5"/>
<dbReference type="FunCoup" id="Q8NGQ5">
    <property type="interactions" value="416"/>
</dbReference>
<dbReference type="STRING" id="9606.ENSP00000334934"/>
<dbReference type="GlyCosmos" id="Q8NGQ5">
    <property type="glycosylation" value="1 site, No reported glycans"/>
</dbReference>
<dbReference type="GlyGen" id="Q8NGQ5">
    <property type="glycosylation" value="1 site"/>
</dbReference>
<dbReference type="iPTMnet" id="Q8NGQ5"/>
<dbReference type="PhosphoSitePlus" id="Q8NGQ5"/>
<dbReference type="BioMuta" id="OR9Q1"/>
<dbReference type="DMDM" id="38372749"/>
<dbReference type="MassIVE" id="Q8NGQ5"/>
<dbReference type="PaxDb" id="9606-ENSP00000334934"/>
<dbReference type="Antibodypedia" id="52716">
    <property type="antibodies" value="105 antibodies from 20 providers"/>
</dbReference>
<dbReference type="DNASU" id="219956"/>
<dbReference type="Ensembl" id="ENST00000335397.3">
    <property type="protein sequence ID" value="ENSP00000334934.3"/>
    <property type="gene ID" value="ENSG00000186509.4"/>
</dbReference>
<dbReference type="Ensembl" id="ENST00000612174.1">
    <property type="protein sequence ID" value="ENSP00000479549.1"/>
    <property type="gene ID" value="ENSG00000186509.4"/>
</dbReference>
<dbReference type="GeneID" id="219956"/>
<dbReference type="KEGG" id="hsa:219956"/>
<dbReference type="MANE-Select" id="ENST00000335397.3">
    <property type="protein sequence ID" value="ENSP00000334934.3"/>
    <property type="RefSeq nucleotide sequence ID" value="NM_001005212.4"/>
    <property type="RefSeq protein sequence ID" value="NP_001005212.1"/>
</dbReference>
<dbReference type="UCSC" id="uc001nmj.4">
    <property type="organism name" value="human"/>
</dbReference>
<dbReference type="AGR" id="HGNC:14724"/>
<dbReference type="CTD" id="219956"/>
<dbReference type="DisGeNET" id="219956"/>
<dbReference type="GeneCards" id="OR9Q1"/>
<dbReference type="HGNC" id="HGNC:14724">
    <property type="gene designation" value="OR9Q1"/>
</dbReference>
<dbReference type="HPA" id="ENSG00000186509">
    <property type="expression patterns" value="Not detected"/>
</dbReference>
<dbReference type="neXtProt" id="NX_Q8NGQ5"/>
<dbReference type="OpenTargets" id="ENSG00000186509"/>
<dbReference type="PharmGKB" id="PA32805"/>
<dbReference type="VEuPathDB" id="HostDB:ENSG00000186509"/>
<dbReference type="eggNOG" id="ENOG502RF13">
    <property type="taxonomic scope" value="Eukaryota"/>
</dbReference>
<dbReference type="GeneTree" id="ENSGT01120000271831"/>
<dbReference type="HOGENOM" id="CLU_012526_5_5_1"/>
<dbReference type="InParanoid" id="Q8NGQ5"/>
<dbReference type="OMA" id="PACMVAI"/>
<dbReference type="OrthoDB" id="9445793at2759"/>
<dbReference type="PAN-GO" id="Q8NGQ5">
    <property type="GO annotations" value="4 GO annotations based on evolutionary models"/>
</dbReference>
<dbReference type="PhylomeDB" id="Q8NGQ5"/>
<dbReference type="TreeFam" id="TF337111"/>
<dbReference type="PathwayCommons" id="Q8NGQ5"/>
<dbReference type="Reactome" id="R-HSA-9752946">
    <property type="pathway name" value="Expression and translocation of olfactory receptors"/>
</dbReference>
<dbReference type="BioGRID-ORCS" id="219956">
    <property type="hits" value="6 hits in 750 CRISPR screens"/>
</dbReference>
<dbReference type="ChiTaRS" id="OR9Q1">
    <property type="organism name" value="human"/>
</dbReference>
<dbReference type="GeneWiki" id="OR9Q1"/>
<dbReference type="GenomeRNAi" id="219956"/>
<dbReference type="Pharos" id="Q8NGQ5">
    <property type="development level" value="Tdark"/>
</dbReference>
<dbReference type="PRO" id="PR:Q8NGQ5"/>
<dbReference type="Proteomes" id="UP000005640">
    <property type="component" value="Chromosome 11"/>
</dbReference>
<dbReference type="RNAct" id="Q8NGQ5">
    <property type="molecule type" value="protein"/>
</dbReference>
<dbReference type="Bgee" id="ENSG00000186509">
    <property type="expression patterns" value="Expressed in omental fat pad and 1 other cell type or tissue"/>
</dbReference>
<dbReference type="GO" id="GO:0005886">
    <property type="term" value="C:plasma membrane"/>
    <property type="evidence" value="ECO:0007669"/>
    <property type="project" value="UniProtKB-SubCell"/>
</dbReference>
<dbReference type="GO" id="GO:0004930">
    <property type="term" value="F:G protein-coupled receptor activity"/>
    <property type="evidence" value="ECO:0007669"/>
    <property type="project" value="UniProtKB-KW"/>
</dbReference>
<dbReference type="GO" id="GO:0005549">
    <property type="term" value="F:odorant binding"/>
    <property type="evidence" value="ECO:0000318"/>
    <property type="project" value="GO_Central"/>
</dbReference>
<dbReference type="GO" id="GO:0004984">
    <property type="term" value="F:olfactory receptor activity"/>
    <property type="evidence" value="ECO:0000318"/>
    <property type="project" value="GO_Central"/>
</dbReference>
<dbReference type="GO" id="GO:0007186">
    <property type="term" value="P:G protein-coupled receptor signaling pathway"/>
    <property type="evidence" value="ECO:0000318"/>
    <property type="project" value="GO_Central"/>
</dbReference>
<dbReference type="GO" id="GO:0007608">
    <property type="term" value="P:sensory perception of smell"/>
    <property type="evidence" value="ECO:0000318"/>
    <property type="project" value="GO_Central"/>
</dbReference>
<dbReference type="CDD" id="cd15230">
    <property type="entry name" value="7tmA_OR5-like"/>
    <property type="match status" value="1"/>
</dbReference>
<dbReference type="FunFam" id="1.20.1070.10:FF:000003">
    <property type="entry name" value="Olfactory receptor"/>
    <property type="match status" value="1"/>
</dbReference>
<dbReference type="Gene3D" id="1.20.1070.10">
    <property type="entry name" value="Rhodopsin 7-helix transmembrane proteins"/>
    <property type="match status" value="1"/>
</dbReference>
<dbReference type="InterPro" id="IPR000276">
    <property type="entry name" value="GPCR_Rhodpsn"/>
</dbReference>
<dbReference type="InterPro" id="IPR017452">
    <property type="entry name" value="GPCR_Rhodpsn_7TM"/>
</dbReference>
<dbReference type="InterPro" id="IPR000725">
    <property type="entry name" value="Olfact_rcpt"/>
</dbReference>
<dbReference type="PANTHER" id="PTHR48018">
    <property type="entry name" value="OLFACTORY RECEPTOR"/>
    <property type="match status" value="1"/>
</dbReference>
<dbReference type="Pfam" id="PF13853">
    <property type="entry name" value="7tm_4"/>
    <property type="match status" value="1"/>
</dbReference>
<dbReference type="PRINTS" id="PR00237">
    <property type="entry name" value="GPCRRHODOPSN"/>
</dbReference>
<dbReference type="PRINTS" id="PR00245">
    <property type="entry name" value="OLFACTORYR"/>
</dbReference>
<dbReference type="SUPFAM" id="SSF81321">
    <property type="entry name" value="Family A G protein-coupled receptor-like"/>
    <property type="match status" value="1"/>
</dbReference>
<dbReference type="PROSITE" id="PS00237">
    <property type="entry name" value="G_PROTEIN_RECEP_F1_1"/>
    <property type="match status" value="1"/>
</dbReference>
<dbReference type="PROSITE" id="PS50262">
    <property type="entry name" value="G_PROTEIN_RECEP_F1_2"/>
    <property type="match status" value="1"/>
</dbReference>